<gene>
    <name type="ordered locus">RPD_4171</name>
</gene>
<proteinExistence type="inferred from homology"/>
<dbReference type="EMBL" id="CP000283">
    <property type="protein sequence ID" value="ABE41390.1"/>
    <property type="molecule type" value="Genomic_DNA"/>
</dbReference>
<dbReference type="SMR" id="Q130U9"/>
<dbReference type="STRING" id="316057.RPD_4171"/>
<dbReference type="KEGG" id="rpd:RPD_4171"/>
<dbReference type="eggNOG" id="COG0217">
    <property type="taxonomic scope" value="Bacteria"/>
</dbReference>
<dbReference type="HOGENOM" id="CLU_062974_2_2_5"/>
<dbReference type="BioCyc" id="RPAL316057:RPD_RS20985-MONOMER"/>
<dbReference type="Proteomes" id="UP000001818">
    <property type="component" value="Chromosome"/>
</dbReference>
<dbReference type="GO" id="GO:0005829">
    <property type="term" value="C:cytosol"/>
    <property type="evidence" value="ECO:0007669"/>
    <property type="project" value="TreeGrafter"/>
</dbReference>
<dbReference type="GO" id="GO:0003677">
    <property type="term" value="F:DNA binding"/>
    <property type="evidence" value="ECO:0007669"/>
    <property type="project" value="UniProtKB-UniRule"/>
</dbReference>
<dbReference type="GO" id="GO:0006355">
    <property type="term" value="P:regulation of DNA-templated transcription"/>
    <property type="evidence" value="ECO:0007669"/>
    <property type="project" value="UniProtKB-UniRule"/>
</dbReference>
<dbReference type="FunFam" id="1.10.10.200:FF:000002">
    <property type="entry name" value="Probable transcriptional regulatory protein CLM62_37755"/>
    <property type="match status" value="1"/>
</dbReference>
<dbReference type="Gene3D" id="1.10.10.200">
    <property type="match status" value="1"/>
</dbReference>
<dbReference type="Gene3D" id="3.30.70.980">
    <property type="match status" value="2"/>
</dbReference>
<dbReference type="HAMAP" id="MF_00693">
    <property type="entry name" value="Transcrip_reg_TACO1"/>
    <property type="match status" value="1"/>
</dbReference>
<dbReference type="InterPro" id="IPR017856">
    <property type="entry name" value="Integrase-like_N"/>
</dbReference>
<dbReference type="InterPro" id="IPR048300">
    <property type="entry name" value="TACO1_YebC-like_2nd/3rd_dom"/>
</dbReference>
<dbReference type="InterPro" id="IPR049083">
    <property type="entry name" value="TACO1_YebC_N"/>
</dbReference>
<dbReference type="InterPro" id="IPR002876">
    <property type="entry name" value="Transcrip_reg_TACO1-like"/>
</dbReference>
<dbReference type="InterPro" id="IPR026564">
    <property type="entry name" value="Transcrip_reg_TACO1-like_dom3"/>
</dbReference>
<dbReference type="InterPro" id="IPR029072">
    <property type="entry name" value="YebC-like"/>
</dbReference>
<dbReference type="NCBIfam" id="NF001030">
    <property type="entry name" value="PRK00110.1"/>
    <property type="match status" value="1"/>
</dbReference>
<dbReference type="NCBIfam" id="NF009044">
    <property type="entry name" value="PRK12378.1"/>
    <property type="match status" value="1"/>
</dbReference>
<dbReference type="NCBIfam" id="TIGR01033">
    <property type="entry name" value="YebC/PmpR family DNA-binding transcriptional regulator"/>
    <property type="match status" value="1"/>
</dbReference>
<dbReference type="PANTHER" id="PTHR12532:SF6">
    <property type="entry name" value="TRANSCRIPTIONAL REGULATORY PROTEIN YEBC-RELATED"/>
    <property type="match status" value="1"/>
</dbReference>
<dbReference type="PANTHER" id="PTHR12532">
    <property type="entry name" value="TRANSLATIONAL ACTIVATOR OF CYTOCHROME C OXIDASE 1"/>
    <property type="match status" value="1"/>
</dbReference>
<dbReference type="Pfam" id="PF20772">
    <property type="entry name" value="TACO1_YebC_N"/>
    <property type="match status" value="1"/>
</dbReference>
<dbReference type="Pfam" id="PF01709">
    <property type="entry name" value="Transcrip_reg"/>
    <property type="match status" value="1"/>
</dbReference>
<dbReference type="SUPFAM" id="SSF75625">
    <property type="entry name" value="YebC-like"/>
    <property type="match status" value="1"/>
</dbReference>
<reference key="1">
    <citation type="submission" date="2006-03" db="EMBL/GenBank/DDBJ databases">
        <title>Complete sequence of Rhodopseudomonas palustris BisB5.</title>
        <authorList>
            <consortium name="US DOE Joint Genome Institute"/>
            <person name="Copeland A."/>
            <person name="Lucas S."/>
            <person name="Lapidus A."/>
            <person name="Barry K."/>
            <person name="Detter J.C."/>
            <person name="Glavina del Rio T."/>
            <person name="Hammon N."/>
            <person name="Israni S."/>
            <person name="Dalin E."/>
            <person name="Tice H."/>
            <person name="Pitluck S."/>
            <person name="Chain P."/>
            <person name="Malfatti S."/>
            <person name="Shin M."/>
            <person name="Vergez L."/>
            <person name="Schmutz J."/>
            <person name="Larimer F."/>
            <person name="Land M."/>
            <person name="Hauser L."/>
            <person name="Pelletier D.A."/>
            <person name="Kyrpides N."/>
            <person name="Lykidis A."/>
            <person name="Oda Y."/>
            <person name="Harwood C.S."/>
            <person name="Richardson P."/>
        </authorList>
    </citation>
    <scope>NUCLEOTIDE SEQUENCE [LARGE SCALE GENOMIC DNA]</scope>
    <source>
        <strain>BisB5</strain>
    </source>
</reference>
<comment type="subcellular location">
    <subcellularLocation>
        <location evidence="1">Cytoplasm</location>
    </subcellularLocation>
</comment>
<comment type="similarity">
    <text evidence="1">Belongs to the TACO1 family.</text>
</comment>
<feature type="chain" id="PRO_1000045362" description="Probable transcriptional regulatory protein RPD_4171">
    <location>
        <begin position="1"/>
        <end position="248"/>
    </location>
</feature>
<feature type="region of interest" description="Disordered" evidence="2">
    <location>
        <begin position="1"/>
        <end position="22"/>
    </location>
</feature>
<keyword id="KW-0963">Cytoplasm</keyword>
<keyword id="KW-0238">DNA-binding</keyword>
<keyword id="KW-0804">Transcription</keyword>
<keyword id="KW-0805">Transcription regulation</keyword>
<sequence>MAGHSQFKNIMHRKGKQDAQRSKAFSKLAREITVAAKLGTPDPAMNPRLRAAVIAARQENMPKDNIERAIKKAIGGDSENYDEIRYEGYGPGGVAVIVEALTDNRNRAASDIRSYFTKSGGNLGETGSVSFMFDRTGVIEYDAGKASADDMLDAAIEAGADDVLSSEGGHEVFASQETFRDVAKALEAKFGEPRKAALIWKPQNTVAVDDETGEKLFKLMEHLNEHDDVQNVYANFEVSDALMAKMAG</sequence>
<organism>
    <name type="scientific">Rhodopseudomonas palustris (strain BisB5)</name>
    <dbReference type="NCBI Taxonomy" id="316057"/>
    <lineage>
        <taxon>Bacteria</taxon>
        <taxon>Pseudomonadati</taxon>
        <taxon>Pseudomonadota</taxon>
        <taxon>Alphaproteobacteria</taxon>
        <taxon>Hyphomicrobiales</taxon>
        <taxon>Nitrobacteraceae</taxon>
        <taxon>Rhodopseudomonas</taxon>
    </lineage>
</organism>
<accession>Q130U9</accession>
<name>Y4171_RHOPS</name>
<protein>
    <recommendedName>
        <fullName evidence="1">Probable transcriptional regulatory protein RPD_4171</fullName>
    </recommendedName>
</protein>
<evidence type="ECO:0000255" key="1">
    <source>
        <dbReference type="HAMAP-Rule" id="MF_00693"/>
    </source>
</evidence>
<evidence type="ECO:0000256" key="2">
    <source>
        <dbReference type="SAM" id="MobiDB-lite"/>
    </source>
</evidence>